<gene>
    <name type="primary">cyaD</name>
    <name type="ordered locus">BN118_0470</name>
</gene>
<sequence>MRRALRELAARHGRVLAASWRQRHRRPAGWFDPVETEFLPSALSLQERPISPTARWLARILMALAAGALVWSVVGKTEIVVHAAGKVVPVGQSKIIAASETGRVARVLVADNSRVAAGDVLLRLDAGVTEAEERKWRVQAAQARQDEARSRAMIRALDTGRAPVLAELPADPGMMAAQSYLDSQYADYQAQLRSIEAAIATYRRELGLVTQIAHAHRGLRRDGDVSQQAYLEKEQARMTLEGRLRQSEAQRAALQTQTRRQAFETLVLARKLAAQAEQEIARTSAQRSRLVLTAPVDGVVQQLVALTEGTAVAATQPLMMVVPSGAGIQVQAQLDSKDIGFVRAGAPATVKVGAYDYTKYGTLEGKVLYVSPDTVVDDRQQHSYRVTIALAHPALEVDGKPRLLKEGMAVQADIRTGSRRLIEYLLSPVARHAGESLGER</sequence>
<reference key="1">
    <citation type="journal article" date="1988" name="EMBO J.">
        <title>Secretion of cyclolysin, the calmodulin-sensitive adenylate cyclase-haemolysin bifunctional protein of Bordetella pertussis.</title>
        <authorList>
            <person name="Glaser P."/>
            <person name="Sakamoto H."/>
            <person name="Bellalou J."/>
            <person name="Ullmann A."/>
            <person name="Danchin A."/>
        </authorList>
    </citation>
    <scope>NUCLEOTIDE SEQUENCE [GENOMIC DNA]</scope>
    <scope>FUNCTION</scope>
    <source>
        <strain>ATCC 9797 / DSM 5571 / CCUG 30873 / LMG 14455 / NCTC 10739 / 18323</strain>
    </source>
</reference>
<reference key="2">
    <citation type="journal article" date="2012" name="BMC Genomics">
        <title>Comparative genomics of the classical Bordetella subspecies: the evolution and exchange of virulence-associated diversity amongst closely related pathogens.</title>
        <authorList>
            <person name="Park J."/>
            <person name="Zhang Y."/>
            <person name="Buboltz A.M."/>
            <person name="Zhang X."/>
            <person name="Schuster S.C."/>
            <person name="Ahuja U."/>
            <person name="Liu M."/>
            <person name="Miller J.F."/>
            <person name="Sebaihia M."/>
            <person name="Bentley S.D."/>
            <person name="Parkhill J."/>
            <person name="Harvill E.T."/>
        </authorList>
    </citation>
    <scope>NUCLEOTIDE SEQUENCE [LARGE SCALE GENOMIC DNA]</scope>
    <source>
        <strain>ATCC 9797 / DSM 5571 / CCUG 30873 / LMG 14455 / NCTC 10739 / 18323</strain>
    </source>
</reference>
<protein>
    <recommendedName>
        <fullName>Protein CyaD</fullName>
    </recommendedName>
</protein>
<name>CYAD_BORP1</name>
<comment type="function">
    <text evidence="2">CyaD is necessary for transport of calmodulin-sensitive adenylate cyclase-hemolysin (cyclolysin).</text>
</comment>
<comment type="subcellular location">
    <subcellularLocation>
        <location evidence="3">Cell inner membrane</location>
        <topology evidence="3">Single-pass membrane protein</topology>
    </subcellularLocation>
</comment>
<comment type="similarity">
    <text evidence="3">Belongs to the membrane fusion protein (MFP) (TC 8.A.1) family.</text>
</comment>
<evidence type="ECO:0000255" key="1"/>
<evidence type="ECO:0000269" key="2">
    <source>
    </source>
</evidence>
<evidence type="ECO:0000305" key="3"/>
<proteinExistence type="inferred from homology"/>
<organism>
    <name type="scientific">Bordetella pertussis (strain ATCC 9797 / DSM 5571 / CCUG 30873 / LMG 14455 / NCTC 10739 / 18323)</name>
    <dbReference type="NCBI Taxonomy" id="568706"/>
    <lineage>
        <taxon>Bacteria</taxon>
        <taxon>Pseudomonadati</taxon>
        <taxon>Pseudomonadota</taxon>
        <taxon>Betaproteobacteria</taxon>
        <taxon>Burkholderiales</taxon>
        <taxon>Alcaligenaceae</taxon>
        <taxon>Bordetella</taxon>
    </lineage>
</organism>
<dbReference type="EMBL" id="X14199">
    <property type="protein sequence ID" value="CAA32413.1"/>
    <property type="molecule type" value="Genomic_DNA"/>
</dbReference>
<dbReference type="EMBL" id="HE965805">
    <property type="protein sequence ID" value="CCJ61895.1"/>
    <property type="molecule type" value="Genomic_DNA"/>
</dbReference>
<dbReference type="PIR" id="S02387">
    <property type="entry name" value="BVBRCD"/>
</dbReference>
<dbReference type="RefSeq" id="WP_010929997.1">
    <property type="nucleotide sequence ID" value="NC_018518.1"/>
</dbReference>
<dbReference type="SMR" id="J7QCA7"/>
<dbReference type="GeneID" id="69600714"/>
<dbReference type="KEGG" id="bper:BN118_0470"/>
<dbReference type="eggNOG" id="COG0845">
    <property type="taxonomic scope" value="Bacteria"/>
</dbReference>
<dbReference type="HOGENOM" id="CLU_023976_0_1_4"/>
<dbReference type="Proteomes" id="UP000005250">
    <property type="component" value="Chromosome"/>
</dbReference>
<dbReference type="GO" id="GO:0005886">
    <property type="term" value="C:plasma membrane"/>
    <property type="evidence" value="ECO:0007669"/>
    <property type="project" value="UniProtKB-SubCell"/>
</dbReference>
<dbReference type="GO" id="GO:0031640">
    <property type="term" value="P:killing of cells of another organism"/>
    <property type="evidence" value="ECO:0007669"/>
    <property type="project" value="UniProtKB-KW"/>
</dbReference>
<dbReference type="GO" id="GO:0009306">
    <property type="term" value="P:protein secretion"/>
    <property type="evidence" value="ECO:0007669"/>
    <property type="project" value="InterPro"/>
</dbReference>
<dbReference type="GO" id="GO:0055085">
    <property type="term" value="P:transmembrane transport"/>
    <property type="evidence" value="ECO:0007669"/>
    <property type="project" value="InterPro"/>
</dbReference>
<dbReference type="Gene3D" id="2.40.30.170">
    <property type="match status" value="1"/>
</dbReference>
<dbReference type="Gene3D" id="2.40.50.100">
    <property type="match status" value="1"/>
</dbReference>
<dbReference type="InterPro" id="IPR050739">
    <property type="entry name" value="MFP"/>
</dbReference>
<dbReference type="InterPro" id="IPR006144">
    <property type="entry name" value="Secretion_HlyD_CS"/>
</dbReference>
<dbReference type="InterPro" id="IPR010129">
    <property type="entry name" value="T1SS_HlyD"/>
</dbReference>
<dbReference type="NCBIfam" id="TIGR01843">
    <property type="entry name" value="type_I_hlyD"/>
    <property type="match status" value="1"/>
</dbReference>
<dbReference type="PANTHER" id="PTHR30386:SF27">
    <property type="entry name" value="MEMBRANE FUSION PROTEIN (MFP) FAMILY PROTEIN"/>
    <property type="match status" value="1"/>
</dbReference>
<dbReference type="PANTHER" id="PTHR30386">
    <property type="entry name" value="MEMBRANE FUSION SUBUNIT OF EMRAB-TOLC MULTIDRUG EFFLUX PUMP"/>
    <property type="match status" value="1"/>
</dbReference>
<dbReference type="Pfam" id="PF13437">
    <property type="entry name" value="HlyD_3"/>
    <property type="match status" value="1"/>
</dbReference>
<dbReference type="PRINTS" id="PR01490">
    <property type="entry name" value="RTXTOXIND"/>
</dbReference>
<dbReference type="PROSITE" id="PS00543">
    <property type="entry name" value="HLYD_FAMILY"/>
    <property type="match status" value="1"/>
</dbReference>
<keyword id="KW-0997">Cell inner membrane</keyword>
<keyword id="KW-1003">Cell membrane</keyword>
<keyword id="KW-0204">Cytolysis</keyword>
<keyword id="KW-0354">Hemolysis</keyword>
<keyword id="KW-0472">Membrane</keyword>
<keyword id="KW-0812">Transmembrane</keyword>
<keyword id="KW-1133">Transmembrane helix</keyword>
<keyword id="KW-0813">Transport</keyword>
<accession>J7QCA7</accession>
<accession>P11091</accession>
<feature type="chain" id="PRO_0000421306" description="Protein CyaD">
    <location>
        <begin position="1"/>
        <end position="440"/>
    </location>
</feature>
<feature type="topological domain" description="Cytoplasmic" evidence="1">
    <location>
        <begin position="1"/>
        <end position="55"/>
    </location>
</feature>
<feature type="transmembrane region" description="Helical" evidence="1">
    <location>
        <begin position="56"/>
        <end position="75"/>
    </location>
</feature>
<feature type="topological domain" description="Periplasmic" evidence="1">
    <location>
        <begin position="76"/>
        <end position="440"/>
    </location>
</feature>
<feature type="sequence conflict" description="In Ref. 1; CAA32413." evidence="3" ref="1">
    <original>L</original>
    <variation>V</variation>
    <location>
        <position position="16"/>
    </location>
</feature>
<feature type="sequence conflict" description="In Ref. 1; CAA32413." evidence="3" ref="1">
    <original>EL</original>
    <variation>DV</variation>
    <location>
        <begin position="205"/>
        <end position="206"/>
    </location>
</feature>